<keyword id="KW-0963">Cytoplasm</keyword>
<keyword id="KW-0413">Isomerase</keyword>
<keyword id="KW-0627">Porphyrin biosynthesis</keyword>
<keyword id="KW-0663">Pyridoxal phosphate</keyword>
<reference key="1">
    <citation type="journal article" date="2007" name="Nat. Biotechnol.">
        <title>Comparative analysis of the complete genome sequence of the plant growth-promoting bacterium Bacillus amyloliquefaciens FZB42.</title>
        <authorList>
            <person name="Chen X.H."/>
            <person name="Koumoutsi A."/>
            <person name="Scholz R."/>
            <person name="Eisenreich A."/>
            <person name="Schneider K."/>
            <person name="Heinemeyer I."/>
            <person name="Morgenstern B."/>
            <person name="Voss B."/>
            <person name="Hess W.R."/>
            <person name="Reva O."/>
            <person name="Junge H."/>
            <person name="Voigt B."/>
            <person name="Jungblut P.R."/>
            <person name="Vater J."/>
            <person name="Suessmuth R."/>
            <person name="Liesegang H."/>
            <person name="Strittmatter A."/>
            <person name="Gottschalk G."/>
            <person name="Borriss R."/>
        </authorList>
    </citation>
    <scope>NUCLEOTIDE SEQUENCE [LARGE SCALE GENOMIC DNA]</scope>
    <source>
        <strain>DSM 23117 / BGSC 10A6 / LMG 26770 / FZB42</strain>
    </source>
</reference>
<sequence length="429" mass="46139">MRSYEKSKAAFKEAQKLMPGGVNSPVRAFKSVDMDPIFMQRGKGSKIFDIDGNEYIDYVLSWGPLILGHTNDRVVESLKKVAENGTSFGASTEVENELAKLVIDRVPSVEIVRMVSSGTEATMSALRLARGYTGRNKILKFEGCYHGHGDSLLIKAGSGVATLGLPDSPGVPEGIAMNTITVPYNDLESVALAFREYGEDIAGVIVEPVAGNMGVVPPQEGFLQGLRDMTEQYGALLIFDEVMTGFRVDYNCAQGYFGVTPDLTCLGKVIGGGLPVGAYGGKADIMERIAPSGPIYQAGTLSGNPLAMTAGLETLQQLTPESYQEFVKKGDMLEEGISKAAAAHGIPHTFNRAGSMIGFFFTNEPVINYEAAKSSDLKLFAKYYKGMADAGVFLPPSQFEGLFLSTAHTMEDIENTIQAAEKVFQAISR</sequence>
<gene>
    <name evidence="1" type="primary">hemL2</name>
    <name type="ordered locus">RBAM_025180</name>
</gene>
<organism>
    <name type="scientific">Bacillus velezensis (strain DSM 23117 / BGSC 10A6 / LMG 26770 / FZB42)</name>
    <name type="common">Bacillus amyloliquefaciens subsp. plantarum</name>
    <dbReference type="NCBI Taxonomy" id="326423"/>
    <lineage>
        <taxon>Bacteria</taxon>
        <taxon>Bacillati</taxon>
        <taxon>Bacillota</taxon>
        <taxon>Bacilli</taxon>
        <taxon>Bacillales</taxon>
        <taxon>Bacillaceae</taxon>
        <taxon>Bacillus</taxon>
        <taxon>Bacillus amyloliquefaciens group</taxon>
    </lineage>
</organism>
<evidence type="ECO:0000255" key="1">
    <source>
        <dbReference type="HAMAP-Rule" id="MF_00375"/>
    </source>
</evidence>
<comment type="catalytic activity">
    <reaction evidence="1">
        <text>(S)-4-amino-5-oxopentanoate = 5-aminolevulinate</text>
        <dbReference type="Rhea" id="RHEA:14265"/>
        <dbReference type="ChEBI" id="CHEBI:57501"/>
        <dbReference type="ChEBI" id="CHEBI:356416"/>
        <dbReference type="EC" id="5.4.3.8"/>
    </reaction>
</comment>
<comment type="cofactor">
    <cofactor evidence="1">
        <name>pyridoxal 5'-phosphate</name>
        <dbReference type="ChEBI" id="CHEBI:597326"/>
    </cofactor>
</comment>
<comment type="pathway">
    <text evidence="1">Porphyrin-containing compound metabolism; protoporphyrin-IX biosynthesis; 5-aminolevulinate from L-glutamyl-tRNA(Glu): step 2/2.</text>
</comment>
<comment type="subunit">
    <text evidence="1">Homodimer.</text>
</comment>
<comment type="subcellular location">
    <subcellularLocation>
        <location evidence="1">Cytoplasm</location>
    </subcellularLocation>
</comment>
<comment type="similarity">
    <text evidence="1">Belongs to the class-III pyridoxal-phosphate-dependent aminotransferase family. HemL subfamily.</text>
</comment>
<feature type="chain" id="PRO_0000382258" description="Glutamate-1-semialdehyde 2,1-aminomutase 2">
    <location>
        <begin position="1"/>
        <end position="429"/>
    </location>
</feature>
<feature type="modified residue" description="N6-(pyridoxal phosphate)lysine" evidence="1">
    <location>
        <position position="268"/>
    </location>
</feature>
<accession>A7Z7A2</accession>
<dbReference type="EC" id="5.4.3.8" evidence="1"/>
<dbReference type="EMBL" id="CP000560">
    <property type="protein sequence ID" value="ABS74878.1"/>
    <property type="molecule type" value="Genomic_DNA"/>
</dbReference>
<dbReference type="SMR" id="A7Z7A2"/>
<dbReference type="GeneID" id="93081660"/>
<dbReference type="KEGG" id="bay:RBAM_025180"/>
<dbReference type="HOGENOM" id="CLU_016922_1_5_9"/>
<dbReference type="UniPathway" id="UPA00251">
    <property type="reaction ID" value="UER00317"/>
</dbReference>
<dbReference type="Proteomes" id="UP000001120">
    <property type="component" value="Chromosome"/>
</dbReference>
<dbReference type="GO" id="GO:0005737">
    <property type="term" value="C:cytoplasm"/>
    <property type="evidence" value="ECO:0007669"/>
    <property type="project" value="UniProtKB-SubCell"/>
</dbReference>
<dbReference type="GO" id="GO:0042286">
    <property type="term" value="F:glutamate-1-semialdehyde 2,1-aminomutase activity"/>
    <property type="evidence" value="ECO:0007669"/>
    <property type="project" value="UniProtKB-UniRule"/>
</dbReference>
<dbReference type="GO" id="GO:0030170">
    <property type="term" value="F:pyridoxal phosphate binding"/>
    <property type="evidence" value="ECO:0007669"/>
    <property type="project" value="InterPro"/>
</dbReference>
<dbReference type="GO" id="GO:0008483">
    <property type="term" value="F:transaminase activity"/>
    <property type="evidence" value="ECO:0007669"/>
    <property type="project" value="InterPro"/>
</dbReference>
<dbReference type="GO" id="GO:0006782">
    <property type="term" value="P:protoporphyrinogen IX biosynthetic process"/>
    <property type="evidence" value="ECO:0007669"/>
    <property type="project" value="UniProtKB-UniRule"/>
</dbReference>
<dbReference type="CDD" id="cd00610">
    <property type="entry name" value="OAT_like"/>
    <property type="match status" value="1"/>
</dbReference>
<dbReference type="FunFam" id="3.40.640.10:FF:000021">
    <property type="entry name" value="Glutamate-1-semialdehyde 2,1-aminomutase"/>
    <property type="match status" value="1"/>
</dbReference>
<dbReference type="Gene3D" id="3.90.1150.10">
    <property type="entry name" value="Aspartate Aminotransferase, domain 1"/>
    <property type="match status" value="1"/>
</dbReference>
<dbReference type="Gene3D" id="3.40.640.10">
    <property type="entry name" value="Type I PLP-dependent aspartate aminotransferase-like (Major domain)"/>
    <property type="match status" value="1"/>
</dbReference>
<dbReference type="HAMAP" id="MF_00375">
    <property type="entry name" value="HemL_aminotrans_3"/>
    <property type="match status" value="1"/>
</dbReference>
<dbReference type="InterPro" id="IPR004639">
    <property type="entry name" value="4pyrrol_synth_GluAld_NH2Trfase"/>
</dbReference>
<dbReference type="InterPro" id="IPR005814">
    <property type="entry name" value="Aminotrans_3"/>
</dbReference>
<dbReference type="InterPro" id="IPR049704">
    <property type="entry name" value="Aminotrans_3_PPA_site"/>
</dbReference>
<dbReference type="InterPro" id="IPR015424">
    <property type="entry name" value="PyrdxlP-dep_Trfase"/>
</dbReference>
<dbReference type="InterPro" id="IPR015421">
    <property type="entry name" value="PyrdxlP-dep_Trfase_major"/>
</dbReference>
<dbReference type="InterPro" id="IPR015422">
    <property type="entry name" value="PyrdxlP-dep_Trfase_small"/>
</dbReference>
<dbReference type="NCBIfam" id="TIGR00713">
    <property type="entry name" value="hemL"/>
    <property type="match status" value="1"/>
</dbReference>
<dbReference type="NCBIfam" id="NF000818">
    <property type="entry name" value="PRK00062.1"/>
    <property type="match status" value="1"/>
</dbReference>
<dbReference type="PANTHER" id="PTHR43713">
    <property type="entry name" value="GLUTAMATE-1-SEMIALDEHYDE 2,1-AMINOMUTASE"/>
    <property type="match status" value="1"/>
</dbReference>
<dbReference type="PANTHER" id="PTHR43713:SF3">
    <property type="entry name" value="GLUTAMATE-1-SEMIALDEHYDE 2,1-AMINOMUTASE 1, CHLOROPLASTIC-RELATED"/>
    <property type="match status" value="1"/>
</dbReference>
<dbReference type="Pfam" id="PF00202">
    <property type="entry name" value="Aminotran_3"/>
    <property type="match status" value="1"/>
</dbReference>
<dbReference type="SUPFAM" id="SSF53383">
    <property type="entry name" value="PLP-dependent transferases"/>
    <property type="match status" value="1"/>
</dbReference>
<dbReference type="PROSITE" id="PS00600">
    <property type="entry name" value="AA_TRANSFER_CLASS_3"/>
    <property type="match status" value="1"/>
</dbReference>
<name>GSA2_BACVZ</name>
<protein>
    <recommendedName>
        <fullName evidence="1">Glutamate-1-semialdehyde 2,1-aminomutase 2</fullName>
        <shortName evidence="1">GSA 2</shortName>
        <ecNumber evidence="1">5.4.3.8</ecNumber>
    </recommendedName>
    <alternativeName>
        <fullName evidence="1">Glutamate-1-semialdehyde aminotransferase 2</fullName>
        <shortName evidence="1">GSA-AT 2</shortName>
    </alternativeName>
</protein>
<proteinExistence type="inferred from homology"/>